<gene>
    <name type="primary">Serpinb10</name>
</gene>
<proteinExistence type="evidence at transcript level"/>
<name>SPB10_RAT</name>
<feature type="chain" id="PRO_0000094116" description="Serpin B10">
    <location>
        <begin position="1"/>
        <end position="397"/>
    </location>
</feature>
<feature type="short sequence motif" description="Nuclear localization signal" evidence="1">
    <location>
        <begin position="74"/>
        <end position="77"/>
    </location>
</feature>
<feature type="site" description="Reactive bond" evidence="1">
    <location>
        <begin position="362"/>
        <end position="363"/>
    </location>
</feature>
<feature type="sequence conflict" description="In Ref. 2; AAH61735." evidence="3" ref="2">
    <original>M</original>
    <variation>I</variation>
    <location>
        <position position="88"/>
    </location>
</feature>
<feature type="sequence conflict" description="In Ref. 2; AAH61735." evidence="3" ref="2">
    <original>D</original>
    <variation>G</variation>
    <location>
        <position position="164"/>
    </location>
</feature>
<feature type="sequence conflict" description="In Ref. 2; AAH61735." evidence="3" ref="2">
    <original>R</original>
    <variation>Q</variation>
    <location>
        <position position="288"/>
    </location>
</feature>
<feature type="sequence conflict" description="In Ref. 2; AAH61735." evidence="3" ref="2">
    <original>D</original>
    <variation>Y</variation>
    <location>
        <position position="391"/>
    </location>
</feature>
<reference key="1">
    <citation type="journal article" date="2002" name="J. Biol. Chem.">
        <title>Identification and characterization of a novel rat ov-serpin family member, trespin.</title>
        <authorList>
            <person name="Chipuk J.E."/>
            <person name="Stewart L.V."/>
            <person name="Ranieri A."/>
            <person name="Song K."/>
            <person name="Danielpour D."/>
        </authorList>
    </citation>
    <scope>NUCLEOTIDE SEQUENCE [MRNA]</scope>
    <scope>FUNCTION</scope>
    <scope>SUBCELLULAR LOCATION</scope>
    <scope>TISSUE SPECIFICITY</scope>
    <source>
        <strain>Wistar</strain>
    </source>
</reference>
<reference key="2">
    <citation type="journal article" date="2004" name="Genome Res.">
        <title>The status, quality, and expansion of the NIH full-length cDNA project: the Mammalian Gene Collection (MGC).</title>
        <authorList>
            <consortium name="The MGC Project Team"/>
        </authorList>
    </citation>
    <scope>NUCLEOTIDE SEQUENCE [LARGE SCALE MRNA]</scope>
    <source>
        <tissue>Prostate</tissue>
    </source>
</reference>
<organism>
    <name type="scientific">Rattus norvegicus</name>
    <name type="common">Rat</name>
    <dbReference type="NCBI Taxonomy" id="10116"/>
    <lineage>
        <taxon>Eukaryota</taxon>
        <taxon>Metazoa</taxon>
        <taxon>Chordata</taxon>
        <taxon>Craniata</taxon>
        <taxon>Vertebrata</taxon>
        <taxon>Euteleostomi</taxon>
        <taxon>Mammalia</taxon>
        <taxon>Eutheria</taxon>
        <taxon>Euarchontoglires</taxon>
        <taxon>Glires</taxon>
        <taxon>Rodentia</taxon>
        <taxon>Myomorpha</taxon>
        <taxon>Muroidea</taxon>
        <taxon>Muridae</taxon>
        <taxon>Murinae</taxon>
        <taxon>Rattus</taxon>
    </lineage>
</organism>
<keyword id="KW-0963">Cytoplasm</keyword>
<keyword id="KW-0539">Nucleus</keyword>
<keyword id="KW-0646">Protease inhibitor</keyword>
<keyword id="KW-1185">Reference proteome</keyword>
<keyword id="KW-0722">Serine protease inhibitor</keyword>
<evidence type="ECO:0000250" key="1"/>
<evidence type="ECO:0000269" key="2">
    <source>
    </source>
</evidence>
<evidence type="ECO:0000305" key="3"/>
<accession>Q8K3K4</accession>
<accession>Q6P7C1</accession>
<sequence>MASLAVSINQFAVEFSKKLAESAEGRNIFFSPWGISTSLAMVYLGTKGTTAAQMSQVLHFGSIQDFKFGPDSEKKRKMECHSGKSEEMQSDFQTLTAKILKHGNSYVLKIANRIYVEKTYLFHNKYLEDMKTYFGAEPQSVNFVEASGQIRKEINSWVGSQTGDKIPNLLPDDAVDNKTTMVLVNALYFKGTWEHQFSVQNTTERPFRINKTTSKPVQMMSMKQSLQVFHIEELQTIGVQLHYQNREFSLLLLLPEEVEGLKQLERAITYEKLDKWTSADMMDTYEVRLYLPKFKMEESYDLQSALRDMGMTDAFNQGKANFSNMTSERNLFLSNVFHKTFLEINEEGTEAAAGTGSEVNFRIKAPSIELNADHPFLFLIRHNVTNTILFDGRFYSP</sequence>
<dbReference type="EMBL" id="AY075037">
    <property type="protein sequence ID" value="AAL78042.1"/>
    <property type="molecule type" value="mRNA"/>
</dbReference>
<dbReference type="EMBL" id="BC061735">
    <property type="protein sequence ID" value="AAH61735.1"/>
    <property type="molecule type" value="mRNA"/>
</dbReference>
<dbReference type="RefSeq" id="NP_714955.2">
    <property type="nucleotide sequence ID" value="NM_153733.2"/>
</dbReference>
<dbReference type="SMR" id="Q8K3K4"/>
<dbReference type="FunCoup" id="Q8K3K4">
    <property type="interactions" value="58"/>
</dbReference>
<dbReference type="STRING" id="10116.ENSRNOP00000003314"/>
<dbReference type="MEROPS" id="I04.015"/>
<dbReference type="PhosphoSitePlus" id="Q8K3K4"/>
<dbReference type="PaxDb" id="10116-ENSRNOP00000003314"/>
<dbReference type="GeneID" id="266775"/>
<dbReference type="KEGG" id="rno:266775"/>
<dbReference type="UCSC" id="RGD:628853">
    <property type="organism name" value="rat"/>
</dbReference>
<dbReference type="AGR" id="RGD:628853"/>
<dbReference type="CTD" id="5273"/>
<dbReference type="RGD" id="628853">
    <property type="gene designation" value="Serpinb10"/>
</dbReference>
<dbReference type="eggNOG" id="KOG2392">
    <property type="taxonomic scope" value="Eukaryota"/>
</dbReference>
<dbReference type="InParanoid" id="Q8K3K4"/>
<dbReference type="OrthoDB" id="36824at9989"/>
<dbReference type="PhylomeDB" id="Q8K3K4"/>
<dbReference type="Reactome" id="R-RNO-6798695">
    <property type="pathway name" value="Neutrophil degranulation"/>
</dbReference>
<dbReference type="PRO" id="PR:Q8K3K4"/>
<dbReference type="Proteomes" id="UP000002494">
    <property type="component" value="Unplaced"/>
</dbReference>
<dbReference type="GO" id="GO:0005737">
    <property type="term" value="C:cytoplasm"/>
    <property type="evidence" value="ECO:0007669"/>
    <property type="project" value="UniProtKB-SubCell"/>
</dbReference>
<dbReference type="GO" id="GO:0005615">
    <property type="term" value="C:extracellular space"/>
    <property type="evidence" value="ECO:0000318"/>
    <property type="project" value="GO_Central"/>
</dbReference>
<dbReference type="GO" id="GO:0005634">
    <property type="term" value="C:nucleus"/>
    <property type="evidence" value="ECO:0007669"/>
    <property type="project" value="UniProtKB-SubCell"/>
</dbReference>
<dbReference type="GO" id="GO:0030414">
    <property type="term" value="F:peptidase inhibitor activity"/>
    <property type="evidence" value="ECO:0000314"/>
    <property type="project" value="RGD"/>
</dbReference>
<dbReference type="GO" id="GO:0004867">
    <property type="term" value="F:serine-type endopeptidase inhibitor activity"/>
    <property type="evidence" value="ECO:0000318"/>
    <property type="project" value="GO_Central"/>
</dbReference>
<dbReference type="GO" id="GO:0045861">
    <property type="term" value="P:negative regulation of proteolysis"/>
    <property type="evidence" value="ECO:0000314"/>
    <property type="project" value="RGD"/>
</dbReference>
<dbReference type="CDD" id="cd19569">
    <property type="entry name" value="serpinB10_bomapin"/>
    <property type="match status" value="1"/>
</dbReference>
<dbReference type="FunFam" id="3.30.497.10:FF:000004">
    <property type="entry name" value="Serpin family B member 1"/>
    <property type="match status" value="1"/>
</dbReference>
<dbReference type="FunFam" id="2.30.39.10:FF:000001">
    <property type="entry name" value="Serpin family B member 2"/>
    <property type="match status" value="1"/>
</dbReference>
<dbReference type="Gene3D" id="2.30.39.10">
    <property type="entry name" value="Alpha-1-antitrypsin, domain 1"/>
    <property type="match status" value="1"/>
</dbReference>
<dbReference type="Gene3D" id="3.30.497.10">
    <property type="entry name" value="Antithrombin, subunit I, domain 2"/>
    <property type="match status" value="1"/>
</dbReference>
<dbReference type="InterPro" id="IPR023795">
    <property type="entry name" value="Serpin_CS"/>
</dbReference>
<dbReference type="InterPro" id="IPR023796">
    <property type="entry name" value="Serpin_dom"/>
</dbReference>
<dbReference type="InterPro" id="IPR000215">
    <property type="entry name" value="Serpin_fam"/>
</dbReference>
<dbReference type="InterPro" id="IPR036186">
    <property type="entry name" value="Serpin_sf"/>
</dbReference>
<dbReference type="InterPro" id="IPR042178">
    <property type="entry name" value="Serpin_sf_1"/>
</dbReference>
<dbReference type="InterPro" id="IPR042185">
    <property type="entry name" value="Serpin_sf_2"/>
</dbReference>
<dbReference type="PANTHER" id="PTHR11461">
    <property type="entry name" value="SERINE PROTEASE INHIBITOR, SERPIN"/>
    <property type="match status" value="1"/>
</dbReference>
<dbReference type="PANTHER" id="PTHR11461:SF175">
    <property type="entry name" value="SERPIN B10"/>
    <property type="match status" value="1"/>
</dbReference>
<dbReference type="Pfam" id="PF00079">
    <property type="entry name" value="Serpin"/>
    <property type="match status" value="1"/>
</dbReference>
<dbReference type="SMART" id="SM00093">
    <property type="entry name" value="SERPIN"/>
    <property type="match status" value="1"/>
</dbReference>
<dbReference type="SUPFAM" id="SSF56574">
    <property type="entry name" value="Serpins"/>
    <property type="match status" value="1"/>
</dbReference>
<dbReference type="PROSITE" id="PS00284">
    <property type="entry name" value="SERPIN"/>
    <property type="match status" value="1"/>
</dbReference>
<protein>
    <recommendedName>
        <fullName>Serpin B10</fullName>
    </recommendedName>
    <alternativeName>
        <fullName>TGF-beta-repressible serine proteinase inhibitor</fullName>
        <shortName>Trespin</shortName>
    </alternativeName>
    <alternativeName>
        <fullName>Transforming growth factor beta repressible serpin</fullName>
    </alternativeName>
</protein>
<comment type="function">
    <text evidence="1 2">Protease inhibitor that may play a role in the regulation of protease activities during hematopoiesis and apoptosis induced by TNF. May regulate protease activities in the cytoplasm and in the nucleus (By similarity). Inhibits plasmin.</text>
</comment>
<comment type="subcellular location">
    <subcellularLocation>
        <location evidence="1">Nucleus</location>
    </subcellularLocation>
    <subcellularLocation>
        <location evidence="2">Cytoplasm</location>
    </subcellularLocation>
</comment>
<comment type="tissue specificity">
    <text evidence="2">Expressed in many tissues, including brain, heart, kidney, liver, lung, prostate, skin, spleen and stomach.</text>
</comment>
<comment type="similarity">
    <text evidence="3">Belongs to the serpin family. Ov-serpin subfamily.</text>
</comment>